<sequence length="461" mass="50825">MIKVGILDSTLREGEQTPGVIFTVDQRVEIAKALSDLGVSMIEAGHPAVSPDIYEGIKRIVKLKKEGIITSEIVGHSRAVKRDIEIAAELEVDRIAIFYGVSDLHLKAKHKATREEALRTIAETISYAKNHGVKVRFTAEDGSRTDFDFLVTVSKTARDAGADRVSIADTVGILYPSKTKELFSALTREVPNLEFDIHAHNDLGLAVANALAAIEGGATIIHATVNGLGERVGIVPLQQIAAAIKYHFGIEVVKLDKLQYVSSLVEKYSGIPMPPNYPITGDYAFLHKAGVHVAGVLNDPRTYEFMPPETFGRTRDYTIDKYTGKHALRDKYEKLGVKISDAEMDQILAKIKSNTTIRFYRDVDLLELAEEVTGRVLKPRPPEQIEALISVKCDSNVYTTSVTRRLSVINGVKEVMEISGDYDILVKVQAKDSNELNQIIESIRATKGVRSTLTSLVLKKM</sequence>
<proteinExistence type="inferred from homology"/>
<name>HOSA_SACI3</name>
<keyword id="KW-0028">Amino-acid biosynthesis</keyword>
<keyword id="KW-0457">Lysine biosynthesis</keyword>
<keyword id="KW-0460">Magnesium</keyword>
<keyword id="KW-0464">Manganese</keyword>
<keyword id="KW-0479">Metal-binding</keyword>
<keyword id="KW-0808">Transferase</keyword>
<comment type="function">
    <text evidence="1">Catalyzes the aldol-type condensation of 2-oxoglutarate with acetyl-CoA to yield homocitrate. Carries out the first step of the alpha-aminoadipate (AAA) lysine biosynthesis pathway.</text>
</comment>
<comment type="catalytic activity">
    <reaction evidence="1">
        <text>acetyl-CoA + 2-oxoglutarate + H2O = (2R)-homocitrate + CoA + H(+)</text>
        <dbReference type="Rhea" id="RHEA:12929"/>
        <dbReference type="ChEBI" id="CHEBI:15377"/>
        <dbReference type="ChEBI" id="CHEBI:15378"/>
        <dbReference type="ChEBI" id="CHEBI:16810"/>
        <dbReference type="ChEBI" id="CHEBI:57287"/>
        <dbReference type="ChEBI" id="CHEBI:57288"/>
        <dbReference type="ChEBI" id="CHEBI:58884"/>
        <dbReference type="EC" id="2.3.3.14"/>
    </reaction>
    <physiologicalReaction direction="left-to-right" evidence="1">
        <dbReference type="Rhea" id="RHEA:12930"/>
    </physiologicalReaction>
</comment>
<comment type="cofactor">
    <cofactor evidence="1">
        <name>Mg(2+)</name>
        <dbReference type="ChEBI" id="CHEBI:18420"/>
    </cofactor>
    <cofactor evidence="1">
        <name>Mn(2+)</name>
        <dbReference type="ChEBI" id="CHEBI:29035"/>
    </cofactor>
</comment>
<comment type="pathway">
    <text evidence="1">Amino-acid biosynthesis; L-lysine biosynthesis via AAA pathway; L-alpha-aminoadipate from 2-oxoglutarate: step 1/5.</text>
</comment>
<comment type="similarity">
    <text evidence="2">Belongs to the alpha-IPM synthase/homocitrate synthase family. Homocitrate synthase LYS20/LYS21 subfamily.</text>
</comment>
<dbReference type="EC" id="2.3.3.14" evidence="1 2"/>
<dbReference type="EMBL" id="CP001401">
    <property type="protein sequence ID" value="ACP55178.1"/>
    <property type="molecule type" value="Genomic_DNA"/>
</dbReference>
<dbReference type="SMR" id="C3N5A3"/>
<dbReference type="KEGG" id="sim:M1627_1295"/>
<dbReference type="HOGENOM" id="CLU_022158_4_0_2"/>
<dbReference type="UniPathway" id="UPA00033">
    <property type="reaction ID" value="UER00028"/>
</dbReference>
<dbReference type="Proteomes" id="UP000002307">
    <property type="component" value="Chromosome"/>
</dbReference>
<dbReference type="GO" id="GO:0003852">
    <property type="term" value="F:2-isopropylmalate synthase activity"/>
    <property type="evidence" value="ECO:0007669"/>
    <property type="project" value="TreeGrafter"/>
</dbReference>
<dbReference type="GO" id="GO:0004410">
    <property type="term" value="F:homocitrate synthase activity"/>
    <property type="evidence" value="ECO:0007669"/>
    <property type="project" value="UniProtKB-UniRule"/>
</dbReference>
<dbReference type="GO" id="GO:0046872">
    <property type="term" value="F:metal ion binding"/>
    <property type="evidence" value="ECO:0007669"/>
    <property type="project" value="UniProtKB-KW"/>
</dbReference>
<dbReference type="GO" id="GO:0009098">
    <property type="term" value="P:L-leucine biosynthetic process"/>
    <property type="evidence" value="ECO:0007669"/>
    <property type="project" value="TreeGrafter"/>
</dbReference>
<dbReference type="GO" id="GO:0019878">
    <property type="term" value="P:lysine biosynthetic process via aminoadipic acid"/>
    <property type="evidence" value="ECO:0007669"/>
    <property type="project" value="UniProtKB-UniRule"/>
</dbReference>
<dbReference type="CDD" id="cd07940">
    <property type="entry name" value="DRE_TIM_IPMS"/>
    <property type="match status" value="1"/>
</dbReference>
<dbReference type="Gene3D" id="1.10.238.260">
    <property type="match status" value="1"/>
</dbReference>
<dbReference type="Gene3D" id="3.30.70.920">
    <property type="match status" value="1"/>
</dbReference>
<dbReference type="Gene3D" id="3.20.20.70">
    <property type="entry name" value="Aldolase class I"/>
    <property type="match status" value="1"/>
</dbReference>
<dbReference type="HAMAP" id="MF_02222">
    <property type="entry name" value="Homocitr_synth_fung_arch"/>
    <property type="match status" value="1"/>
</dbReference>
<dbReference type="InterPro" id="IPR050073">
    <property type="entry name" value="2-IPM_HCS-like"/>
</dbReference>
<dbReference type="InterPro" id="IPR002034">
    <property type="entry name" value="AIPM/Hcit_synth_CS"/>
</dbReference>
<dbReference type="InterPro" id="IPR013785">
    <property type="entry name" value="Aldolase_TIM"/>
</dbReference>
<dbReference type="InterPro" id="IPR011008">
    <property type="entry name" value="Dimeric_a/b-barrel"/>
</dbReference>
<dbReference type="InterPro" id="IPR011872">
    <property type="entry name" value="Homocitrate_synth"/>
</dbReference>
<dbReference type="InterPro" id="IPR054691">
    <property type="entry name" value="LeuA/HCS_post-cat"/>
</dbReference>
<dbReference type="InterPro" id="IPR000891">
    <property type="entry name" value="PYR_CT"/>
</dbReference>
<dbReference type="InterPro" id="IPR019887">
    <property type="entry name" value="Tscrpt_reg_AsnC/Lrp_C"/>
</dbReference>
<dbReference type="NCBIfam" id="TIGR02146">
    <property type="entry name" value="LysS_fung_arch"/>
    <property type="match status" value="1"/>
</dbReference>
<dbReference type="NCBIfam" id="NF002085">
    <property type="entry name" value="PRK00915.1-2"/>
    <property type="match status" value="1"/>
</dbReference>
<dbReference type="PANTHER" id="PTHR10277:SF63">
    <property type="entry name" value="HOMOCITRATE SYNTHASE"/>
    <property type="match status" value="1"/>
</dbReference>
<dbReference type="PANTHER" id="PTHR10277">
    <property type="entry name" value="HOMOCITRATE SYNTHASE-RELATED"/>
    <property type="match status" value="1"/>
</dbReference>
<dbReference type="Pfam" id="PF01037">
    <property type="entry name" value="AsnC_trans_reg"/>
    <property type="match status" value="1"/>
</dbReference>
<dbReference type="Pfam" id="PF22617">
    <property type="entry name" value="HCS_D2"/>
    <property type="match status" value="1"/>
</dbReference>
<dbReference type="Pfam" id="PF00682">
    <property type="entry name" value="HMGL-like"/>
    <property type="match status" value="1"/>
</dbReference>
<dbReference type="SUPFAM" id="SSF51569">
    <property type="entry name" value="Aldolase"/>
    <property type="match status" value="1"/>
</dbReference>
<dbReference type="SUPFAM" id="SSF54909">
    <property type="entry name" value="Dimeric alpha+beta barrel"/>
    <property type="match status" value="1"/>
</dbReference>
<dbReference type="PROSITE" id="PS00816">
    <property type="entry name" value="AIPM_HOMOCIT_SYNTH_2"/>
    <property type="match status" value="1"/>
</dbReference>
<dbReference type="PROSITE" id="PS50991">
    <property type="entry name" value="PYR_CT"/>
    <property type="match status" value="1"/>
</dbReference>
<gene>
    <name type="ordered locus">M1627_1295</name>
</gene>
<protein>
    <recommendedName>
        <fullName evidence="2">Homocitrate synthase</fullName>
        <shortName evidence="2">HCS</shortName>
        <ecNumber evidence="1 2">2.3.3.14</ecNumber>
    </recommendedName>
</protein>
<evidence type="ECO:0000250" key="1">
    <source>
        <dbReference type="UniProtKB" id="O87198"/>
    </source>
</evidence>
<evidence type="ECO:0000255" key="2">
    <source>
        <dbReference type="HAMAP-Rule" id="MF_02222"/>
    </source>
</evidence>
<evidence type="ECO:0000255" key="3">
    <source>
        <dbReference type="PROSITE-ProRule" id="PRU01151"/>
    </source>
</evidence>
<feature type="chain" id="PRO_1000213317" description="Homocitrate synthase">
    <location>
        <begin position="1"/>
        <end position="461"/>
    </location>
</feature>
<feature type="domain" description="Pyruvate carboxyltransferase" evidence="3">
    <location>
        <begin position="4"/>
        <end position="259"/>
    </location>
</feature>
<feature type="active site" description="Proton acceptor" evidence="1">
    <location>
        <position position="292"/>
    </location>
</feature>
<feature type="binding site" evidence="1">
    <location>
        <position position="12"/>
    </location>
    <ligand>
        <name>2-oxoglutarate</name>
        <dbReference type="ChEBI" id="CHEBI:16810"/>
    </ligand>
</feature>
<feature type="binding site" evidence="1">
    <location>
        <position position="13"/>
    </location>
    <ligand>
        <name>Mg(2+)</name>
        <dbReference type="ChEBI" id="CHEBI:18420"/>
    </ligand>
</feature>
<feature type="binding site" evidence="1">
    <location>
        <position position="76"/>
    </location>
    <ligand>
        <name>2-oxoglutarate</name>
        <dbReference type="ChEBI" id="CHEBI:16810"/>
    </ligand>
</feature>
<feature type="binding site" evidence="1">
    <location>
        <position position="136"/>
    </location>
    <ligand>
        <name>2-oxoglutarate</name>
        <dbReference type="ChEBI" id="CHEBI:16810"/>
    </ligand>
</feature>
<feature type="binding site" evidence="1">
    <location>
        <position position="170"/>
    </location>
    <ligand>
        <name>2-oxoglutarate</name>
        <dbReference type="ChEBI" id="CHEBI:16810"/>
    </ligand>
</feature>
<feature type="binding site" evidence="1">
    <location>
        <position position="198"/>
    </location>
    <ligand>
        <name>Mg(2+)</name>
        <dbReference type="ChEBI" id="CHEBI:18420"/>
    </ligand>
</feature>
<feature type="binding site" evidence="1">
    <location>
        <position position="200"/>
    </location>
    <ligand>
        <name>Mg(2+)</name>
        <dbReference type="ChEBI" id="CHEBI:18420"/>
    </ligand>
</feature>
<reference key="1">
    <citation type="journal article" date="2009" name="Proc. Natl. Acad. Sci. U.S.A.">
        <title>Biogeography of the Sulfolobus islandicus pan-genome.</title>
        <authorList>
            <person name="Reno M.L."/>
            <person name="Held N.L."/>
            <person name="Fields C.J."/>
            <person name="Burke P.V."/>
            <person name="Whitaker R.J."/>
        </authorList>
    </citation>
    <scope>NUCLEOTIDE SEQUENCE [LARGE SCALE GENOMIC DNA]</scope>
    <source>
        <strain>M.16.27</strain>
    </source>
</reference>
<organism>
    <name type="scientific">Saccharolobus islandicus (strain M.16.27)</name>
    <name type="common">Sulfolobus islandicus</name>
    <dbReference type="NCBI Taxonomy" id="427318"/>
    <lineage>
        <taxon>Archaea</taxon>
        <taxon>Thermoproteota</taxon>
        <taxon>Thermoprotei</taxon>
        <taxon>Sulfolobales</taxon>
        <taxon>Sulfolobaceae</taxon>
        <taxon>Saccharolobus</taxon>
    </lineage>
</organism>
<accession>C3N5A3</accession>